<feature type="chain" id="PRO_0000370699" description="Esterase EstB">
    <location>
        <begin position="1"/>
        <end position="392"/>
    </location>
</feature>
<feature type="active site" description="Acyl-ester intermediate">
    <location>
        <position position="75"/>
    </location>
</feature>
<feature type="mutagenesis site" description="Complete loss of esterase activity." evidence="1">
    <original>S</original>
    <variation>A</variation>
    <location>
        <position position="75"/>
    </location>
</feature>
<feature type="mutagenesis site" description="Retains 30% esterase activity." evidence="1">
    <original>S</original>
    <variation>A</variation>
    <location>
        <position position="149"/>
    </location>
</feature>
<feature type="helix" evidence="4">
    <location>
        <begin position="16"/>
        <end position="31"/>
    </location>
</feature>
<feature type="strand" evidence="4">
    <location>
        <begin position="36"/>
        <end position="44"/>
    </location>
</feature>
<feature type="strand" evidence="4">
    <location>
        <begin position="47"/>
        <end position="58"/>
    </location>
</feature>
<feature type="turn" evidence="4">
    <location>
        <begin position="59"/>
        <end position="62"/>
    </location>
</feature>
<feature type="strand" evidence="4">
    <location>
        <begin position="70"/>
        <end position="72"/>
    </location>
</feature>
<feature type="helix" evidence="4">
    <location>
        <begin position="74"/>
        <end position="76"/>
    </location>
</feature>
<feature type="helix" evidence="4">
    <location>
        <begin position="77"/>
        <end position="90"/>
    </location>
</feature>
<feature type="helix" evidence="4">
    <location>
        <begin position="100"/>
        <end position="102"/>
    </location>
</feature>
<feature type="helix" evidence="4">
    <location>
        <begin position="121"/>
        <end position="125"/>
    </location>
</feature>
<feature type="helix" evidence="4">
    <location>
        <begin position="134"/>
        <end position="137"/>
    </location>
</feature>
<feature type="helix" evidence="4">
    <location>
        <begin position="142"/>
        <end position="146"/>
    </location>
</feature>
<feature type="strand" evidence="4">
    <location>
        <begin position="151"/>
        <end position="153"/>
    </location>
</feature>
<feature type="helix" evidence="4">
    <location>
        <begin position="159"/>
        <end position="168"/>
    </location>
</feature>
<feature type="helix" evidence="4">
    <location>
        <begin position="184"/>
        <end position="196"/>
    </location>
</feature>
<feature type="helix" evidence="4">
    <location>
        <begin position="200"/>
        <end position="207"/>
    </location>
</feature>
<feature type="helix" evidence="4">
    <location>
        <begin position="209"/>
        <end position="212"/>
    </location>
</feature>
<feature type="helix" evidence="4">
    <location>
        <begin position="224"/>
        <end position="226"/>
    </location>
</feature>
<feature type="strand" evidence="4">
    <location>
        <begin position="235"/>
        <end position="237"/>
    </location>
</feature>
<feature type="strand" evidence="4">
    <location>
        <begin position="245"/>
        <end position="248"/>
    </location>
</feature>
<feature type="strand" evidence="4">
    <location>
        <begin position="255"/>
        <end position="259"/>
    </location>
</feature>
<feature type="helix" evidence="4">
    <location>
        <begin position="261"/>
        <end position="265"/>
    </location>
</feature>
<feature type="turn" evidence="4">
    <location>
        <begin position="273"/>
        <end position="275"/>
    </location>
</feature>
<feature type="helix" evidence="4">
    <location>
        <begin position="281"/>
        <end position="293"/>
    </location>
</feature>
<feature type="strand" evidence="4">
    <location>
        <begin position="295"/>
        <end position="298"/>
    </location>
</feature>
<feature type="helix" evidence="4">
    <location>
        <begin position="300"/>
        <end position="307"/>
    </location>
</feature>
<feature type="helix" evidence="4">
    <location>
        <begin position="313"/>
        <end position="315"/>
    </location>
</feature>
<feature type="strand" evidence="4">
    <location>
        <begin position="322"/>
        <end position="324"/>
    </location>
</feature>
<feature type="strand" evidence="4">
    <location>
        <begin position="326"/>
        <end position="332"/>
    </location>
</feature>
<feature type="helix" evidence="4">
    <location>
        <begin position="334"/>
        <end position="337"/>
    </location>
</feature>
<feature type="strand" evidence="4">
    <location>
        <begin position="346"/>
        <end position="350"/>
    </location>
</feature>
<feature type="turn" evidence="4">
    <location>
        <begin position="351"/>
        <end position="353"/>
    </location>
</feature>
<feature type="strand" evidence="4">
    <location>
        <begin position="354"/>
        <end position="359"/>
    </location>
</feature>
<feature type="helix" evidence="4">
    <location>
        <begin position="360"/>
        <end position="362"/>
    </location>
</feature>
<feature type="strand" evidence="4">
    <location>
        <begin position="364"/>
        <end position="373"/>
    </location>
</feature>
<feature type="helix" evidence="4">
    <location>
        <begin position="375"/>
        <end position="378"/>
    </location>
</feature>
<feature type="helix" evidence="4">
    <location>
        <begin position="380"/>
        <end position="389"/>
    </location>
</feature>
<sequence>MTAASLDPTAFSLDAASLAARLDAVFDQALRERRLVGAVAIVARHGEILYRRAQGLADREAGRPMREDTLFRLASVTKPIVALAVLRLVARGELALDAPVTRWLPEFRPRLADGSEPLVTIHHLLTHTSGLGYWLLEGAGSVYDRLGISDGIDLRDFDLDENLRRLASAPLSFAPGSGWQYSLALDVLGAVVERATGQPLAAAVDALVAQPLGMRDCGFVSAEPERFAVPYHDGQPEPVRMRDGIEVPLPEGHGAAVRFAPSRVFEPGAYPSGGAGMYGSADDVLRALEAIRANPGFLPETLADAARRDQAGVGAETRGPGWGFGYLSAVLDDPAAAGTPQHAGTLQWGGVYGHSWFVDRALGLSVLLLTNTAYEGMSGPLTIALRDAVYAR</sequence>
<keyword id="KW-0002">3D-structure</keyword>
<keyword id="KW-0963">Cytoplasm</keyword>
<keyword id="KW-0378">Hydrolase</keyword>
<name>ESTB_BURGA</name>
<protein>
    <recommendedName>
        <fullName>Esterase EstB</fullName>
        <ecNumber>3.1.1.-</ecNumber>
    </recommendedName>
</protein>
<reference key="1">
    <citation type="journal article" date="2001" name="J. Biotechnol.">
        <title>A novel esterase from Burkholderia gladioli which shows high deacetylation activity on cephalosporins is related to beta-lactamases and DD-peptidases.</title>
        <authorList>
            <person name="Petersen E.I."/>
            <person name="Valinger G."/>
            <person name="Soelkner B."/>
            <person name="Stubenrauch G."/>
            <person name="Schwab H."/>
        </authorList>
    </citation>
    <scope>NUCLEOTIDE SEQUENCE [GENOMIC DNA]</scope>
    <scope>CHARACTERIZATION AS AN ESTERASE</scope>
    <scope>MUTAGENESIS OF SER-75 AND SER-149</scope>
    <scope>ABSENCE OF BETA-LACTAMASE ACTIVITY</scope>
    <scope>PROBABLE SUBCELLULAR LOCATION</scope>
    <source>
        <strain>ATCC 10248 / NCPPB 1891</strain>
    </source>
</reference>
<reference key="2">
    <citation type="journal article" date="2007" name="J. Biotechnol.">
        <title>Stability and activity improvement of cephalosporin esterase EstB from Burkholderia gladioli by directed evolution and structural interpretation of muteins.</title>
        <authorList>
            <person name="Valinger G."/>
            <person name="Hermann M."/>
            <person name="Wagner U.G."/>
            <person name="Schwab H."/>
        </authorList>
    </citation>
    <scope>RANDOM MUTAGENESIS TO CREATE MORE STABLE ORGANIC SOLVENT-RESISTANT ENZYME</scope>
    <source>
        <strain>ATCC 10248 / NCPPB 1891</strain>
    </source>
</reference>
<reference key="3">
    <citation type="journal article" date="2007" name="J. Biotechnol.">
        <title>Inverting enantioselectivity of Burkholderia gladioli esterase EstB by directed and designed evolution.</title>
        <authorList>
            <person name="Ivancic M."/>
            <person name="Valinger G."/>
            <person name="Gruber K."/>
            <person name="Schwab H."/>
        </authorList>
    </citation>
    <scope>RANDOM MUTAGENESIS TO ALTER ENANTIOSELECTIVITY</scope>
    <source>
        <strain>ATCC 10248 / NCPPB 1891</strain>
    </source>
</reference>
<reference key="4">
    <citation type="journal article" date="2002" name="Protein Sci.">
        <title>EstB from Burkholderia gladioli: a novel esterase with a beta-lactamase fold reveals steric factors to discriminate between esterolytic and beta-lactam cleaving activity.</title>
        <authorList>
            <person name="Wagner U.G."/>
            <person name="Petersen E.I."/>
            <person name="Schwab H."/>
            <person name="Kratky C."/>
        </authorList>
    </citation>
    <scope>X-RAY CRYSTALLOGRAPHY (1.8 ANGSTROMS) WITH AND WITHOUT THE INHIBITOR DIISOPROPYL-FLUOROPHOSPHATE</scope>
    <source>
        <strain>ATCC 10248 / NCPPB 1891</strain>
    </source>
</reference>
<comment type="function">
    <text>Acts on short-chain (C4-C6) fatty acid esters and triglycerides, including tertiary alcohol esters. Activity on p-nitrophenyl esters is generally higher than on o-nitrophenyl esters. Lacks beta-lactamase activity; it hydrolyzes the ester bond of cephalosporin substrates but there is no opening of the beta-lactam ring observed.</text>
</comment>
<comment type="activity regulation">
    <text>Strongly inhibited by eserin, NaF, HgCl2, SDS and Triton X-100.</text>
</comment>
<comment type="biophysicochemical properties">
    <kinetics>
        <KM>1.3 mM for cephalosporin C</KM>
        <KM>1 mM for 7-amino cephalosporinic acid</KM>
        <Vmax>79.0 umol/min/mg enzyme for cephalosporin C</Vmax>
        <Vmax>77.0 umol/min/mg enzyme for 7-amino cephalosporinic acid</Vmax>
        <text>Esterase, not beta-lactamase activity of the enzyme.</text>
    </kinetics>
    <phDependence>
        <text>Optimum pH is 7.0.</text>
    </phDependence>
    <temperatureDependence>
        <text>Optimum temperature is 43 degrees Celsius.</text>
    </temperatureDependence>
</comment>
<comment type="subcellular location">
    <subcellularLocation>
        <location evidence="3">Cytoplasm</location>
    </subcellularLocation>
</comment>
<comment type="biotechnology">
    <text evidence="2">Directed evolutionary mutagenesis has created an enzyme with 40-fold higher stability in organic solvents. It contains the following changes: Leu-8, Ser-132, Arg-134, Cys-155, Gly-251, Val-311 and Lys-316 and could have applications in antibiotic synthesis (PubMed:17137667).</text>
</comment>
<comment type="similarity">
    <text evidence="3">Belongs to the class-A beta-lactamase family.</text>
</comment>
<organism>
    <name type="scientific">Burkholderia gladioli</name>
    <name type="common">Pseudomonas marginata</name>
    <name type="synonym">Phytomonas marginata</name>
    <dbReference type="NCBI Taxonomy" id="28095"/>
    <lineage>
        <taxon>Bacteria</taxon>
        <taxon>Pseudomonadati</taxon>
        <taxon>Pseudomonadota</taxon>
        <taxon>Betaproteobacteria</taxon>
        <taxon>Burkholderiales</taxon>
        <taxon>Burkholderiaceae</taxon>
        <taxon>Burkholderia</taxon>
    </lineage>
</organism>
<gene>
    <name type="primary">estB</name>
</gene>
<proteinExistence type="evidence at protein level"/>
<dbReference type="EC" id="3.1.1.-"/>
<dbReference type="EMBL" id="U33634">
    <property type="protein sequence ID" value="AAF59826.1"/>
    <property type="molecule type" value="Genomic_DNA"/>
</dbReference>
<dbReference type="RefSeq" id="WP_036056391.1">
    <property type="nucleotide sequence ID" value="NZ_PVHE01000058.1"/>
</dbReference>
<dbReference type="PDB" id="1CI8">
    <property type="method" value="X-ray"/>
    <property type="resolution" value="2.00 A"/>
    <property type="chains" value="A/B=1-392"/>
</dbReference>
<dbReference type="PDB" id="1CI9">
    <property type="method" value="X-ray"/>
    <property type="resolution" value="1.80 A"/>
    <property type="chains" value="A/B=1-392"/>
</dbReference>
<dbReference type="PDBsum" id="1CI8"/>
<dbReference type="PDBsum" id="1CI9"/>
<dbReference type="SMR" id="Q9KX40"/>
<dbReference type="DrugBank" id="DB04491">
    <property type="generic name" value="Diisopropylphosphono Group"/>
</dbReference>
<dbReference type="MEROPS" id="S12.950"/>
<dbReference type="OrthoDB" id="9801061at2"/>
<dbReference type="EvolutionaryTrace" id="Q9KX40"/>
<dbReference type="GO" id="GO:0005737">
    <property type="term" value="C:cytoplasm"/>
    <property type="evidence" value="ECO:0007669"/>
    <property type="project" value="UniProtKB-SubCell"/>
</dbReference>
<dbReference type="GO" id="GO:0016787">
    <property type="term" value="F:hydrolase activity"/>
    <property type="evidence" value="ECO:0007669"/>
    <property type="project" value="UniProtKB-KW"/>
</dbReference>
<dbReference type="Gene3D" id="3.40.710.10">
    <property type="entry name" value="DD-peptidase/beta-lactamase superfamily"/>
    <property type="match status" value="1"/>
</dbReference>
<dbReference type="InterPro" id="IPR001466">
    <property type="entry name" value="Beta-lactam-related"/>
</dbReference>
<dbReference type="InterPro" id="IPR012338">
    <property type="entry name" value="Beta-lactam/transpept-like"/>
</dbReference>
<dbReference type="InterPro" id="IPR023650">
    <property type="entry name" value="Beta-lactam_class-A_AS"/>
</dbReference>
<dbReference type="InterPro" id="IPR050789">
    <property type="entry name" value="Diverse_Enzym_Activities"/>
</dbReference>
<dbReference type="PANTHER" id="PTHR43283:SF3">
    <property type="entry name" value="BETA-LACTAMASE FAMILY PROTEIN (AFU_ORTHOLOGUE AFUA_5G07500)"/>
    <property type="match status" value="1"/>
</dbReference>
<dbReference type="PANTHER" id="PTHR43283">
    <property type="entry name" value="BETA-LACTAMASE-RELATED"/>
    <property type="match status" value="1"/>
</dbReference>
<dbReference type="Pfam" id="PF00144">
    <property type="entry name" value="Beta-lactamase"/>
    <property type="match status" value="1"/>
</dbReference>
<dbReference type="SUPFAM" id="SSF56601">
    <property type="entry name" value="beta-lactamase/transpeptidase-like"/>
    <property type="match status" value="1"/>
</dbReference>
<dbReference type="PROSITE" id="PS00146">
    <property type="entry name" value="BETA_LACTAMASE_A"/>
    <property type="match status" value="1"/>
</dbReference>
<evidence type="ECO:0000269" key="1">
    <source>
    </source>
</evidence>
<evidence type="ECO:0000269" key="2">
    <source>
    </source>
</evidence>
<evidence type="ECO:0000305" key="3"/>
<evidence type="ECO:0007829" key="4">
    <source>
        <dbReference type="PDB" id="1CI9"/>
    </source>
</evidence>
<accession>Q9KX40</accession>